<gene>
    <name type="primary">Atxn3</name>
    <name type="synonym">Mjd</name>
</gene>
<organism>
    <name type="scientific">Mus musculus</name>
    <name type="common">Mouse</name>
    <dbReference type="NCBI Taxonomy" id="10090"/>
    <lineage>
        <taxon>Eukaryota</taxon>
        <taxon>Metazoa</taxon>
        <taxon>Chordata</taxon>
        <taxon>Craniata</taxon>
        <taxon>Vertebrata</taxon>
        <taxon>Euteleostomi</taxon>
        <taxon>Mammalia</taxon>
        <taxon>Eutheria</taxon>
        <taxon>Euarchontoglires</taxon>
        <taxon>Glires</taxon>
        <taxon>Rodentia</taxon>
        <taxon>Myomorpha</taxon>
        <taxon>Muroidea</taxon>
        <taxon>Muridae</taxon>
        <taxon>Murinae</taxon>
        <taxon>Mus</taxon>
        <taxon>Mus</taxon>
    </lineage>
</organism>
<reference key="1">
    <citation type="journal article" date="2005" name="Science">
        <title>The transcriptional landscape of the mammalian genome.</title>
        <authorList>
            <person name="Carninci P."/>
            <person name="Kasukawa T."/>
            <person name="Katayama S."/>
            <person name="Gough J."/>
            <person name="Frith M.C."/>
            <person name="Maeda N."/>
            <person name="Oyama R."/>
            <person name="Ravasi T."/>
            <person name="Lenhard B."/>
            <person name="Wells C."/>
            <person name="Kodzius R."/>
            <person name="Shimokawa K."/>
            <person name="Bajic V.B."/>
            <person name="Brenner S.E."/>
            <person name="Batalov S."/>
            <person name="Forrest A.R."/>
            <person name="Zavolan M."/>
            <person name="Davis M.J."/>
            <person name="Wilming L.G."/>
            <person name="Aidinis V."/>
            <person name="Allen J.E."/>
            <person name="Ambesi-Impiombato A."/>
            <person name="Apweiler R."/>
            <person name="Aturaliya R.N."/>
            <person name="Bailey T.L."/>
            <person name="Bansal M."/>
            <person name="Baxter L."/>
            <person name="Beisel K.W."/>
            <person name="Bersano T."/>
            <person name="Bono H."/>
            <person name="Chalk A.M."/>
            <person name="Chiu K.P."/>
            <person name="Choudhary V."/>
            <person name="Christoffels A."/>
            <person name="Clutterbuck D.R."/>
            <person name="Crowe M.L."/>
            <person name="Dalla E."/>
            <person name="Dalrymple B.P."/>
            <person name="de Bono B."/>
            <person name="Della Gatta G."/>
            <person name="di Bernardo D."/>
            <person name="Down T."/>
            <person name="Engstrom P."/>
            <person name="Fagiolini M."/>
            <person name="Faulkner G."/>
            <person name="Fletcher C.F."/>
            <person name="Fukushima T."/>
            <person name="Furuno M."/>
            <person name="Futaki S."/>
            <person name="Gariboldi M."/>
            <person name="Georgii-Hemming P."/>
            <person name="Gingeras T.R."/>
            <person name="Gojobori T."/>
            <person name="Green R.E."/>
            <person name="Gustincich S."/>
            <person name="Harbers M."/>
            <person name="Hayashi Y."/>
            <person name="Hensch T.K."/>
            <person name="Hirokawa N."/>
            <person name="Hill D."/>
            <person name="Huminiecki L."/>
            <person name="Iacono M."/>
            <person name="Ikeo K."/>
            <person name="Iwama A."/>
            <person name="Ishikawa T."/>
            <person name="Jakt M."/>
            <person name="Kanapin A."/>
            <person name="Katoh M."/>
            <person name="Kawasawa Y."/>
            <person name="Kelso J."/>
            <person name="Kitamura H."/>
            <person name="Kitano H."/>
            <person name="Kollias G."/>
            <person name="Krishnan S.P."/>
            <person name="Kruger A."/>
            <person name="Kummerfeld S.K."/>
            <person name="Kurochkin I.V."/>
            <person name="Lareau L.F."/>
            <person name="Lazarevic D."/>
            <person name="Lipovich L."/>
            <person name="Liu J."/>
            <person name="Liuni S."/>
            <person name="McWilliam S."/>
            <person name="Madan Babu M."/>
            <person name="Madera M."/>
            <person name="Marchionni L."/>
            <person name="Matsuda H."/>
            <person name="Matsuzawa S."/>
            <person name="Miki H."/>
            <person name="Mignone F."/>
            <person name="Miyake S."/>
            <person name="Morris K."/>
            <person name="Mottagui-Tabar S."/>
            <person name="Mulder N."/>
            <person name="Nakano N."/>
            <person name="Nakauchi H."/>
            <person name="Ng P."/>
            <person name="Nilsson R."/>
            <person name="Nishiguchi S."/>
            <person name="Nishikawa S."/>
            <person name="Nori F."/>
            <person name="Ohara O."/>
            <person name="Okazaki Y."/>
            <person name="Orlando V."/>
            <person name="Pang K.C."/>
            <person name="Pavan W.J."/>
            <person name="Pavesi G."/>
            <person name="Pesole G."/>
            <person name="Petrovsky N."/>
            <person name="Piazza S."/>
            <person name="Reed J."/>
            <person name="Reid J.F."/>
            <person name="Ring B.Z."/>
            <person name="Ringwald M."/>
            <person name="Rost B."/>
            <person name="Ruan Y."/>
            <person name="Salzberg S.L."/>
            <person name="Sandelin A."/>
            <person name="Schneider C."/>
            <person name="Schoenbach C."/>
            <person name="Sekiguchi K."/>
            <person name="Semple C.A."/>
            <person name="Seno S."/>
            <person name="Sessa L."/>
            <person name="Sheng Y."/>
            <person name="Shibata Y."/>
            <person name="Shimada H."/>
            <person name="Shimada K."/>
            <person name="Silva D."/>
            <person name="Sinclair B."/>
            <person name="Sperling S."/>
            <person name="Stupka E."/>
            <person name="Sugiura K."/>
            <person name="Sultana R."/>
            <person name="Takenaka Y."/>
            <person name="Taki K."/>
            <person name="Tammoja K."/>
            <person name="Tan S.L."/>
            <person name="Tang S."/>
            <person name="Taylor M.S."/>
            <person name="Tegner J."/>
            <person name="Teichmann S.A."/>
            <person name="Ueda H.R."/>
            <person name="van Nimwegen E."/>
            <person name="Verardo R."/>
            <person name="Wei C.L."/>
            <person name="Yagi K."/>
            <person name="Yamanishi H."/>
            <person name="Zabarovsky E."/>
            <person name="Zhu S."/>
            <person name="Zimmer A."/>
            <person name="Hide W."/>
            <person name="Bult C."/>
            <person name="Grimmond S.M."/>
            <person name="Teasdale R.D."/>
            <person name="Liu E.T."/>
            <person name="Brusic V."/>
            <person name="Quackenbush J."/>
            <person name="Wahlestedt C."/>
            <person name="Mattick J.S."/>
            <person name="Hume D.A."/>
            <person name="Kai C."/>
            <person name="Sasaki D."/>
            <person name="Tomaru Y."/>
            <person name="Fukuda S."/>
            <person name="Kanamori-Katayama M."/>
            <person name="Suzuki M."/>
            <person name="Aoki J."/>
            <person name="Arakawa T."/>
            <person name="Iida J."/>
            <person name="Imamura K."/>
            <person name="Itoh M."/>
            <person name="Kato T."/>
            <person name="Kawaji H."/>
            <person name="Kawagashira N."/>
            <person name="Kawashima T."/>
            <person name="Kojima M."/>
            <person name="Kondo S."/>
            <person name="Konno H."/>
            <person name="Nakano K."/>
            <person name="Ninomiya N."/>
            <person name="Nishio T."/>
            <person name="Okada M."/>
            <person name="Plessy C."/>
            <person name="Shibata K."/>
            <person name="Shiraki T."/>
            <person name="Suzuki S."/>
            <person name="Tagami M."/>
            <person name="Waki K."/>
            <person name="Watahiki A."/>
            <person name="Okamura-Oho Y."/>
            <person name="Suzuki H."/>
            <person name="Kawai J."/>
            <person name="Hayashizaki Y."/>
        </authorList>
    </citation>
    <scope>NUCLEOTIDE SEQUENCE [LARGE SCALE MRNA]</scope>
    <source>
        <strain>NOD</strain>
        <tissue>Stomach</tissue>
        <tissue>Thymus</tissue>
    </source>
</reference>
<reference key="2">
    <citation type="journal article" date="2004" name="Mol. Cell. Proteomics">
        <title>Phosphoproteomic analysis of the developing mouse brain.</title>
        <authorList>
            <person name="Ballif B.A."/>
            <person name="Villen J."/>
            <person name="Beausoleil S.A."/>
            <person name="Schwartz D."/>
            <person name="Gygi S.P."/>
        </authorList>
    </citation>
    <scope>PHOSPHORYLATION [LARGE SCALE ANALYSIS] AT SER-219</scope>
    <scope>IDENTIFICATION BY MASS SPECTROMETRY [LARGE SCALE ANALYSIS]</scope>
    <source>
        <tissue>Embryonic brain</tissue>
    </source>
</reference>
<reference key="3">
    <citation type="journal article" date="2007" name="Proc. Natl. Acad. Sci. U.S.A.">
        <title>Large-scale phosphorylation analysis of mouse liver.</title>
        <authorList>
            <person name="Villen J."/>
            <person name="Beausoleil S.A."/>
            <person name="Gerber S.A."/>
            <person name="Gygi S.P."/>
        </authorList>
    </citation>
    <scope>PHOSPHORYLATION [LARGE SCALE ANALYSIS] AT SER-268 AND SER-273</scope>
    <scope>IDENTIFICATION BY MASS SPECTROMETRY [LARGE SCALE ANALYSIS]</scope>
    <source>
        <tissue>Liver</tissue>
    </source>
</reference>
<reference key="4">
    <citation type="journal article" date="2010" name="Cell">
        <title>A tissue-specific atlas of mouse protein phosphorylation and expression.</title>
        <authorList>
            <person name="Huttlin E.L."/>
            <person name="Jedrychowski M.P."/>
            <person name="Elias J.E."/>
            <person name="Goswami T."/>
            <person name="Rad R."/>
            <person name="Beausoleil S.A."/>
            <person name="Villen J."/>
            <person name="Haas W."/>
            <person name="Sowa M.E."/>
            <person name="Gygi S.P."/>
        </authorList>
    </citation>
    <scope>PHOSPHORYLATION [LARGE SCALE ANALYSIS] AT SER-219; SER-268; SER-272; SER-273 AND SER-321</scope>
    <scope>IDENTIFICATION BY MASS SPECTROMETRY [LARGE SCALE ANALYSIS]</scope>
    <source>
        <tissue>Brown adipose tissue</tissue>
        <tissue>Heart</tissue>
        <tissue>Kidney</tissue>
        <tissue>Lung</tissue>
        <tissue>Spleen</tissue>
        <tissue>Testis</tissue>
    </source>
</reference>
<reference key="5">
    <citation type="journal article" date="2011" name="Mol. Cell">
        <title>Ube2w and ataxin-3 coordinately regulate the ubiquitin ligase CHIP.</title>
        <authorList>
            <person name="Scaglione K.M."/>
            <person name="Zavodszky E."/>
            <person name="Todi S.V."/>
            <person name="Patury S."/>
            <person name="Xu P."/>
            <person name="Rodriguez-Lebron E."/>
            <person name="Fischer S."/>
            <person name="Konen J."/>
            <person name="Djarmati A."/>
            <person name="Peng J."/>
            <person name="Gestwicki J.E."/>
            <person name="Paulson H.L."/>
        </authorList>
    </citation>
    <scope>FUNCTION</scope>
    <scope>INTERACTION WITH STUB1</scope>
    <scope>UBIQUITINATION</scope>
    <scope>MUTAGENESIS OF CYS-14</scope>
</reference>
<reference key="6">
    <citation type="journal article" date="2017" name="Nature">
        <title>Polyglutamine tracts regulate beclin 1-dependent autophagy.</title>
        <authorList>
            <person name="Ashkenazi A."/>
            <person name="Bento C.F."/>
            <person name="Ricketts T."/>
            <person name="Vicinanza M."/>
            <person name="Siddiqi F."/>
            <person name="Pavel M."/>
            <person name="Squitieri F."/>
            <person name="Hardenberg M.C."/>
            <person name="Imarisio S."/>
            <person name="Menzies F.M."/>
            <person name="Rubinsztein D.C."/>
        </authorList>
    </citation>
    <scope>INTERACTION WITH BECN1</scope>
    <scope>FUNCTION</scope>
    <scope>DOMAIN</scope>
</reference>
<reference key="7">
    <citation type="journal article" date="2003" name="Proteins">
        <title>Structural modeling of ataxin-3 reveals distant homology to adaptins.</title>
        <authorList>
            <person name="Albrecht M."/>
            <person name="Hoffmann D."/>
            <person name="Evert B.O."/>
            <person name="Schmitt I."/>
            <person name="Wuellner U."/>
            <person name="Lengauer T."/>
        </authorList>
    </citation>
    <scope>3D-STRUCTURE MODELING</scope>
</reference>
<protein>
    <recommendedName>
        <fullName>Ataxin-3</fullName>
        <ecNumber>3.4.19.12</ecNumber>
    </recommendedName>
    <alternativeName>
        <fullName>Machado-Joseph disease protein 1 homolog</fullName>
    </alternativeName>
</protein>
<evidence type="ECO:0000250" key="1"/>
<evidence type="ECO:0000250" key="2">
    <source>
        <dbReference type="UniProtKB" id="P54252"/>
    </source>
</evidence>
<evidence type="ECO:0000255" key="3">
    <source>
        <dbReference type="PROSITE-ProRule" id="PRU00213"/>
    </source>
</evidence>
<evidence type="ECO:0000255" key="4">
    <source>
        <dbReference type="PROSITE-ProRule" id="PRU00331"/>
    </source>
</evidence>
<evidence type="ECO:0000256" key="5">
    <source>
        <dbReference type="SAM" id="MobiDB-lite"/>
    </source>
</evidence>
<evidence type="ECO:0000269" key="6">
    <source>
    </source>
</evidence>
<evidence type="ECO:0000269" key="7">
    <source>
    </source>
</evidence>
<evidence type="ECO:0000305" key="8">
    <source>
    </source>
</evidence>
<evidence type="ECO:0000305" key="9">
    <source>
    </source>
</evidence>
<evidence type="ECO:0007744" key="10">
    <source>
    </source>
</evidence>
<evidence type="ECO:0007744" key="11">
    <source>
    </source>
</evidence>
<evidence type="ECO:0007744" key="12">
    <source>
    </source>
</evidence>
<accession>Q9CVD2</accession>
<comment type="function">
    <text evidence="2 6 7">Deubiquitinating enzyme involved in protein homeostasis maintenance, transcription, cytoskeleton regulation, myogenesis and degradation of misfolded chaperone substrates (By similarity). Binds long polyubiquitin chains and trims them, while it has weak or no activity against chains of 4 or less ubiquitins (By similarity). Involved in degradation of misfolded chaperone substrates via its interaction with STUB1/CHIP: recruited to monoubiquitinated STUB1/CHIP, and restricts the length of ubiquitin chain attached to STUB1/CHIP substrates and preventing further chain extension (PubMed:21855799). Interacts with key regulators of transcription and represses transcription: acts as a histone-binding protein that regulates transcription (By similarity). Acts as a negative regulator of mTORC1 signaling in response to amino acid deprivation by mediating deubiquitination of RHEB, thereby promoting RHEB inactivation by the TSC-TBC complex (By similarity). Regulates autophagy via the deubiquitination of 'Lys-402' of BECN1 leading to the stabilization of BECN1 (PubMed:28445460).</text>
</comment>
<comment type="catalytic activity">
    <reaction evidence="8 9">
        <text>Thiol-dependent hydrolysis of ester, thioester, amide, peptide and isopeptide bonds formed by the C-terminal Gly of ubiquitin (a 76-residue protein attached to proteins as an intracellular targeting signal).</text>
        <dbReference type="EC" id="3.4.19.12"/>
    </reaction>
</comment>
<comment type="subunit">
    <text evidence="2 6 7">Interacts with STUB1/CHIP (when monoubiquitinated) (PubMed:21855799). Interacts with DNA repair proteins RAD23A and RAD23B (By similarity). Interacts with BECN1 (via its poly-Gln domain) (PubMed:28445460). Interacts with PRKN, UBR2, VCP and tubulin (By similarity).</text>
</comment>
<comment type="subcellular location">
    <subcellularLocation>
        <location evidence="2">Nucleus matrix</location>
    </subcellularLocation>
    <subcellularLocation>
        <location evidence="2">Nucleus</location>
    </subcellularLocation>
    <subcellularLocation>
        <location evidence="2">Lysosome membrane</location>
        <topology evidence="2">Peripheral membrane protein</topology>
    </subcellularLocation>
    <text evidence="2">Predominantly nuclear, but not exclusively, inner nuclear matrix. Recruited to lysosomal membrane in response to amino acid deprivation by the RagA/RRAGA-RagB/RRAGB complex.</text>
</comment>
<comment type="domain">
    <text evidence="6">The UIM domains bind ubiquitin and interact with various E3 ubiquitin-protein ligase, such as STUB1/CHIP. They are essential to limit the length of ubiquitin chains (PubMed:21855799).</text>
</comment>
<comment type="PTM">
    <text evidence="2">Monoubiquitinated by UBE2W, possibly leading to activate the deubiquitinating enzyme activity (By similarity).</text>
</comment>
<sequence>MESIFHEKQEGSLCAQHCLNNLLQGEYFSPVELSSIAHQLDEEERLRMAEGGVTSEDYRTFLQQPSGNMDDSGFFSIQVISNALKVWGLELILFNSPEYQRLRIDPINERSFICNYKEHWFTVRKLGKQWFNLNSLLTGPELISDTYLALFLAQLQQEGYSIFVVKGDLPDCEADQLLQMIKVQQMHRPKLIGEELAHLKEQSALKADLERVLEAADGSGIFDEDEDDLQRALAISRQEIDMEDEEADLRRAIQLSMQGSSRSMCENSPQTSSPDLSSEELRRRREAYFEKQQQQQQEVDRPGPLSYPRERPTTSSGGRRSDQGGDAVSEEDMLRAAVTMSLETAKDNLKAERKK</sequence>
<name>ATX3_MOUSE</name>
<feature type="chain" id="PRO_0000053832" description="Ataxin-3">
    <location>
        <begin position="1"/>
        <end position="355"/>
    </location>
</feature>
<feature type="domain" description="Josephin" evidence="4">
    <location>
        <begin position="1"/>
        <end position="180"/>
    </location>
</feature>
<feature type="domain" description="UIM 1" evidence="3">
    <location>
        <begin position="224"/>
        <end position="243"/>
    </location>
</feature>
<feature type="domain" description="UIM 2" evidence="3">
    <location>
        <begin position="244"/>
        <end position="263"/>
    </location>
</feature>
<feature type="domain" description="UIM 3" evidence="3">
    <location>
        <begin position="329"/>
        <end position="348"/>
    </location>
</feature>
<feature type="region of interest" description="Disordered" evidence="5">
    <location>
        <begin position="257"/>
        <end position="355"/>
    </location>
</feature>
<feature type="compositionally biased region" description="Polar residues" evidence="5">
    <location>
        <begin position="257"/>
        <end position="275"/>
    </location>
</feature>
<feature type="compositionally biased region" description="Basic and acidic residues" evidence="5">
    <location>
        <begin position="279"/>
        <end position="289"/>
    </location>
</feature>
<feature type="compositionally biased region" description="Basic and acidic residues" evidence="5">
    <location>
        <begin position="344"/>
        <end position="355"/>
    </location>
</feature>
<feature type="active site" description="Nucleophile" evidence="2">
    <location>
        <position position="14"/>
    </location>
</feature>
<feature type="active site" description="Proton acceptor" evidence="4">
    <location>
        <position position="119"/>
    </location>
</feature>
<feature type="active site" evidence="4">
    <location>
        <position position="134"/>
    </location>
</feature>
<feature type="modified residue" description="Phosphoserine" evidence="10 12">
    <location>
        <position position="219"/>
    </location>
</feature>
<feature type="modified residue" description="Phosphoserine" evidence="11 12">
    <location>
        <position position="268"/>
    </location>
</feature>
<feature type="modified residue" description="Phosphoserine" evidence="12">
    <location>
        <position position="272"/>
    </location>
</feature>
<feature type="modified residue" description="Phosphoserine" evidence="11 12">
    <location>
        <position position="273"/>
    </location>
</feature>
<feature type="modified residue" description="Phosphoserine" evidence="12">
    <location>
        <position position="321"/>
    </location>
</feature>
<feature type="cross-link" description="Peptide (Met-Gly) (interchain with G-Cter in ubiquitin)" evidence="1">
    <location>
        <position position="1"/>
    </location>
</feature>
<feature type="cross-link" description="Glycyl lysine isopeptide (Lys-Gly) (interchain with G-Cter in ubiquitin)" evidence="2">
    <location>
        <position position="200"/>
    </location>
</feature>
<feature type="mutagenesis site" description="Abolishes deubiquitinating activity." evidence="6">
    <original>C</original>
    <variation>A</variation>
    <location>
        <position position="14"/>
    </location>
</feature>
<keyword id="KW-0378">Hydrolase</keyword>
<keyword id="KW-1017">Isopeptide bond</keyword>
<keyword id="KW-0458">Lysosome</keyword>
<keyword id="KW-0472">Membrane</keyword>
<keyword id="KW-0539">Nucleus</keyword>
<keyword id="KW-0597">Phosphoprotein</keyword>
<keyword id="KW-0645">Protease</keyword>
<keyword id="KW-1185">Reference proteome</keyword>
<keyword id="KW-0677">Repeat</keyword>
<keyword id="KW-0788">Thiol protease</keyword>
<keyword id="KW-0804">Transcription</keyword>
<keyword id="KW-0805">Transcription regulation</keyword>
<keyword id="KW-0832">Ubl conjugation</keyword>
<keyword id="KW-0833">Ubl conjugation pathway</keyword>
<proteinExistence type="evidence at protein level"/>
<dbReference type="EC" id="3.4.19.12"/>
<dbReference type="EMBL" id="AK008675">
    <property type="protein sequence ID" value="BAB25825.3"/>
    <property type="molecule type" value="mRNA"/>
</dbReference>
<dbReference type="EMBL" id="AK030842">
    <property type="protein sequence ID" value="BAC27155.1"/>
    <property type="molecule type" value="mRNA"/>
</dbReference>
<dbReference type="CCDS" id="CCDS26115.1"/>
<dbReference type="RefSeq" id="NP_083981.2">
    <property type="nucleotide sequence ID" value="NM_029705.3"/>
</dbReference>
<dbReference type="BMRB" id="Q9CVD2"/>
<dbReference type="SMR" id="Q9CVD2"/>
<dbReference type="BioGRID" id="225755">
    <property type="interactions" value="18"/>
</dbReference>
<dbReference type="FunCoup" id="Q9CVD2">
    <property type="interactions" value="4184"/>
</dbReference>
<dbReference type="IntAct" id="Q9CVD2">
    <property type="interactions" value="2"/>
</dbReference>
<dbReference type="MINT" id="Q9CVD2"/>
<dbReference type="STRING" id="10090.ENSMUSP00000021606"/>
<dbReference type="MEROPS" id="C86.001"/>
<dbReference type="iPTMnet" id="Q9CVD2"/>
<dbReference type="PhosphoSitePlus" id="Q9CVD2"/>
<dbReference type="SwissPalm" id="Q9CVD2"/>
<dbReference type="jPOST" id="Q9CVD2"/>
<dbReference type="PaxDb" id="10090-ENSMUSP00000021606"/>
<dbReference type="ProteomicsDB" id="277208"/>
<dbReference type="Pumba" id="Q9CVD2"/>
<dbReference type="Antibodypedia" id="13668">
    <property type="antibodies" value="327 antibodies from 32 providers"/>
</dbReference>
<dbReference type="DNASU" id="110616"/>
<dbReference type="Ensembl" id="ENSMUST00000021606.12">
    <property type="protein sequence ID" value="ENSMUSP00000021606.6"/>
    <property type="gene ID" value="ENSMUSG00000021189.12"/>
</dbReference>
<dbReference type="GeneID" id="110616"/>
<dbReference type="KEGG" id="mmu:110616"/>
<dbReference type="UCSC" id="uc007otv.2">
    <property type="organism name" value="mouse"/>
</dbReference>
<dbReference type="AGR" id="MGI:1099442"/>
<dbReference type="CTD" id="4287"/>
<dbReference type="MGI" id="MGI:1099442">
    <property type="gene designation" value="Atxn3"/>
</dbReference>
<dbReference type="VEuPathDB" id="HostDB:ENSMUSG00000021189"/>
<dbReference type="eggNOG" id="KOG2935">
    <property type="taxonomic scope" value="Eukaryota"/>
</dbReference>
<dbReference type="GeneTree" id="ENSGT00390000001830"/>
<dbReference type="InParanoid" id="Q9CVD2"/>
<dbReference type="OMA" id="LGQAYIC"/>
<dbReference type="OrthoDB" id="10063692at2759"/>
<dbReference type="PhylomeDB" id="Q9CVD2"/>
<dbReference type="TreeFam" id="TF314228"/>
<dbReference type="BRENDA" id="3.4.19.12">
    <property type="organism ID" value="3474"/>
</dbReference>
<dbReference type="Reactome" id="R-MMU-5689877">
    <property type="pathway name" value="Josephin domain DUBs"/>
</dbReference>
<dbReference type="Reactome" id="R-MMU-9615017">
    <property type="pathway name" value="FOXO-mediated transcription of oxidative stress, metabolic and neuronal genes"/>
</dbReference>
<dbReference type="BioGRID-ORCS" id="110616">
    <property type="hits" value="2 hits in 78 CRISPR screens"/>
</dbReference>
<dbReference type="ChiTaRS" id="Atxn3">
    <property type="organism name" value="mouse"/>
</dbReference>
<dbReference type="PRO" id="PR:Q9CVD2"/>
<dbReference type="Proteomes" id="UP000000589">
    <property type="component" value="Chromosome 12"/>
</dbReference>
<dbReference type="RNAct" id="Q9CVD2">
    <property type="molecule type" value="protein"/>
</dbReference>
<dbReference type="Bgee" id="ENSMUSG00000021189">
    <property type="expression patterns" value="Expressed in spermatid and 227 other cell types or tissues"/>
</dbReference>
<dbReference type="ExpressionAtlas" id="Q9CVD2">
    <property type="expression patterns" value="baseline and differential"/>
</dbReference>
<dbReference type="GO" id="GO:0005737">
    <property type="term" value="C:cytoplasm"/>
    <property type="evidence" value="ECO:0000314"/>
    <property type="project" value="MGI"/>
</dbReference>
<dbReference type="GO" id="GO:0005829">
    <property type="term" value="C:cytosol"/>
    <property type="evidence" value="ECO:0000250"/>
    <property type="project" value="ParkinsonsUK-UCL"/>
</dbReference>
<dbReference type="GO" id="GO:0005789">
    <property type="term" value="C:endoplasmic reticulum membrane"/>
    <property type="evidence" value="ECO:0007669"/>
    <property type="project" value="Ensembl"/>
</dbReference>
<dbReference type="GO" id="GO:0005765">
    <property type="term" value="C:lysosomal membrane"/>
    <property type="evidence" value="ECO:0000250"/>
    <property type="project" value="UniProtKB"/>
</dbReference>
<dbReference type="GO" id="GO:0005759">
    <property type="term" value="C:mitochondrial matrix"/>
    <property type="evidence" value="ECO:0000314"/>
    <property type="project" value="MGI"/>
</dbReference>
<dbReference type="GO" id="GO:0031966">
    <property type="term" value="C:mitochondrial membrane"/>
    <property type="evidence" value="ECO:0000314"/>
    <property type="project" value="MGI"/>
</dbReference>
<dbReference type="GO" id="GO:0042405">
    <property type="term" value="C:nuclear inclusion body"/>
    <property type="evidence" value="ECO:0000314"/>
    <property type="project" value="MGI"/>
</dbReference>
<dbReference type="GO" id="GO:0016363">
    <property type="term" value="C:nuclear matrix"/>
    <property type="evidence" value="ECO:0007669"/>
    <property type="project" value="UniProtKB-SubCell"/>
</dbReference>
<dbReference type="GO" id="GO:0005730">
    <property type="term" value="C:nucleolus"/>
    <property type="evidence" value="ECO:0007669"/>
    <property type="project" value="Ensembl"/>
</dbReference>
<dbReference type="GO" id="GO:0005654">
    <property type="term" value="C:nucleoplasm"/>
    <property type="evidence" value="ECO:0007669"/>
    <property type="project" value="Ensembl"/>
</dbReference>
<dbReference type="GO" id="GO:0005634">
    <property type="term" value="C:nucleus"/>
    <property type="evidence" value="ECO:0000314"/>
    <property type="project" value="MGI"/>
</dbReference>
<dbReference type="GO" id="GO:0005886">
    <property type="term" value="C:plasma membrane"/>
    <property type="evidence" value="ECO:0007669"/>
    <property type="project" value="Ensembl"/>
</dbReference>
<dbReference type="GO" id="GO:0051117">
    <property type="term" value="F:ATPase binding"/>
    <property type="evidence" value="ECO:0000250"/>
    <property type="project" value="ParkinsonsUK-UCL"/>
</dbReference>
<dbReference type="GO" id="GO:0004843">
    <property type="term" value="F:cysteine-type deubiquitinase activity"/>
    <property type="evidence" value="ECO:0000314"/>
    <property type="project" value="UniProtKB"/>
</dbReference>
<dbReference type="GO" id="GO:0042802">
    <property type="term" value="F:identical protein binding"/>
    <property type="evidence" value="ECO:0000250"/>
    <property type="project" value="ParkinsonsUK-UCL"/>
</dbReference>
<dbReference type="GO" id="GO:1990380">
    <property type="term" value="F:K48-linked deubiquitinase activity"/>
    <property type="evidence" value="ECO:0000250"/>
    <property type="project" value="ParkinsonsUK-UCL"/>
</dbReference>
<dbReference type="GO" id="GO:0061578">
    <property type="term" value="F:K63-linked deubiquitinase activity"/>
    <property type="evidence" value="ECO:0000250"/>
    <property type="project" value="ParkinsonsUK-UCL"/>
</dbReference>
<dbReference type="GO" id="GO:0031625">
    <property type="term" value="F:ubiquitin protein ligase binding"/>
    <property type="evidence" value="ECO:0000353"/>
    <property type="project" value="UniProtKB"/>
</dbReference>
<dbReference type="GO" id="GO:0030036">
    <property type="term" value="P:actin cytoskeleton organization"/>
    <property type="evidence" value="ECO:0000250"/>
    <property type="project" value="ParkinsonsUK-UCL"/>
</dbReference>
<dbReference type="GO" id="GO:0034198">
    <property type="term" value="P:cellular response to amino acid starvation"/>
    <property type="evidence" value="ECO:0000250"/>
    <property type="project" value="UniProtKB"/>
</dbReference>
<dbReference type="GO" id="GO:0034605">
    <property type="term" value="P:cellular response to heat"/>
    <property type="evidence" value="ECO:0000315"/>
    <property type="project" value="MGI"/>
</dbReference>
<dbReference type="GO" id="GO:0071218">
    <property type="term" value="P:cellular response to misfolded protein"/>
    <property type="evidence" value="ECO:0000315"/>
    <property type="project" value="UniProtKB"/>
</dbReference>
<dbReference type="GO" id="GO:0035640">
    <property type="term" value="P:exploration behavior"/>
    <property type="evidence" value="ECO:0000315"/>
    <property type="project" value="MGI"/>
</dbReference>
<dbReference type="GO" id="GO:0045104">
    <property type="term" value="P:intermediate filament cytoskeleton organization"/>
    <property type="evidence" value="ECO:0000250"/>
    <property type="project" value="ParkinsonsUK-UCL"/>
</dbReference>
<dbReference type="GO" id="GO:0000226">
    <property type="term" value="P:microtubule cytoskeleton organization"/>
    <property type="evidence" value="ECO:0000250"/>
    <property type="project" value="ParkinsonsUK-UCL"/>
</dbReference>
<dbReference type="GO" id="GO:0035520">
    <property type="term" value="P:monoubiquitinated protein deubiquitination"/>
    <property type="evidence" value="ECO:0000314"/>
    <property type="project" value="UniProtKB"/>
</dbReference>
<dbReference type="GO" id="GO:1904262">
    <property type="term" value="P:negative regulation of TORC1 signaling"/>
    <property type="evidence" value="ECO:0000250"/>
    <property type="project" value="UniProtKB"/>
</dbReference>
<dbReference type="GO" id="GO:1904294">
    <property type="term" value="P:positive regulation of ERAD pathway"/>
    <property type="evidence" value="ECO:0007669"/>
    <property type="project" value="Ensembl"/>
</dbReference>
<dbReference type="GO" id="GO:2000060">
    <property type="term" value="P:positive regulation of ubiquitin-dependent protein catabolic process"/>
    <property type="evidence" value="ECO:0007669"/>
    <property type="project" value="Ensembl"/>
</dbReference>
<dbReference type="GO" id="GO:0043161">
    <property type="term" value="P:proteasome-mediated ubiquitin-dependent protein catabolic process"/>
    <property type="evidence" value="ECO:0000315"/>
    <property type="project" value="UniProtKB"/>
</dbReference>
<dbReference type="GO" id="GO:0071108">
    <property type="term" value="P:protein K48-linked deubiquitination"/>
    <property type="evidence" value="ECO:0000250"/>
    <property type="project" value="ParkinsonsUK-UCL"/>
</dbReference>
<dbReference type="GO" id="GO:0070536">
    <property type="term" value="P:protein K63-linked deubiquitination"/>
    <property type="evidence" value="ECO:0000250"/>
    <property type="project" value="ParkinsonsUK-UCL"/>
</dbReference>
<dbReference type="GO" id="GO:1904327">
    <property type="term" value="P:protein localization to cytosolic proteasome complex"/>
    <property type="evidence" value="ECO:0007669"/>
    <property type="project" value="Ensembl"/>
</dbReference>
<dbReference type="GO" id="GO:0006515">
    <property type="term" value="P:protein quality control for misfolded or incompletely synthesized proteins"/>
    <property type="evidence" value="ECO:0000315"/>
    <property type="project" value="UniProtKB"/>
</dbReference>
<dbReference type="GO" id="GO:0010810">
    <property type="term" value="P:regulation of cell-substrate adhesion"/>
    <property type="evidence" value="ECO:0000315"/>
    <property type="project" value="MGI"/>
</dbReference>
<dbReference type="GO" id="GO:0006511">
    <property type="term" value="P:ubiquitin-dependent protein catabolic process"/>
    <property type="evidence" value="ECO:0000315"/>
    <property type="project" value="MGI"/>
</dbReference>
<dbReference type="FunFam" id="3.90.70.40:FF:000005">
    <property type="entry name" value="Ataxin 3"/>
    <property type="match status" value="1"/>
</dbReference>
<dbReference type="FunFam" id="1.10.287.10:FF:000005">
    <property type="entry name" value="ataxin-3 isoform X1"/>
    <property type="match status" value="1"/>
</dbReference>
<dbReference type="Gene3D" id="3.90.70.40">
    <property type="match status" value="1"/>
</dbReference>
<dbReference type="Gene3D" id="1.10.287.10">
    <property type="entry name" value="S15/NS1, RNA-binding"/>
    <property type="match status" value="1"/>
</dbReference>
<dbReference type="InterPro" id="IPR033865">
    <property type="entry name" value="Ataxin-3"/>
</dbReference>
<dbReference type="InterPro" id="IPR006155">
    <property type="entry name" value="Josephin"/>
</dbReference>
<dbReference type="InterPro" id="IPR003903">
    <property type="entry name" value="UIM_dom"/>
</dbReference>
<dbReference type="PANTHER" id="PTHR14159">
    <property type="entry name" value="ATAXIN-3-RELATED"/>
    <property type="match status" value="1"/>
</dbReference>
<dbReference type="PANTHER" id="PTHR14159:SF0">
    <property type="entry name" value="ATAXIN-3-RELATED"/>
    <property type="match status" value="1"/>
</dbReference>
<dbReference type="Pfam" id="PF02099">
    <property type="entry name" value="Josephin"/>
    <property type="match status" value="1"/>
</dbReference>
<dbReference type="Pfam" id="PF16619">
    <property type="entry name" value="SUIM_assoc"/>
    <property type="match status" value="1"/>
</dbReference>
<dbReference type="Pfam" id="PF02809">
    <property type="entry name" value="UIM"/>
    <property type="match status" value="3"/>
</dbReference>
<dbReference type="PRINTS" id="PR01233">
    <property type="entry name" value="JOSEPHIN"/>
</dbReference>
<dbReference type="SMART" id="SM01246">
    <property type="entry name" value="Josephin"/>
    <property type="match status" value="1"/>
</dbReference>
<dbReference type="SMART" id="SM00726">
    <property type="entry name" value="UIM"/>
    <property type="match status" value="3"/>
</dbReference>
<dbReference type="PROSITE" id="PS50957">
    <property type="entry name" value="JOSEPHIN"/>
    <property type="match status" value="1"/>
</dbReference>
<dbReference type="PROSITE" id="PS50330">
    <property type="entry name" value="UIM"/>
    <property type="match status" value="2"/>
</dbReference>